<evidence type="ECO:0000255" key="1">
    <source>
        <dbReference type="HAMAP-Rule" id="MF_01813"/>
    </source>
</evidence>
<evidence type="ECO:0000256" key="2">
    <source>
        <dbReference type="SAM" id="MobiDB-lite"/>
    </source>
</evidence>
<accession>B5ZYK8</accession>
<dbReference type="EC" id="2.1.1.163" evidence="1"/>
<dbReference type="EC" id="2.1.1.201" evidence="1"/>
<dbReference type="EMBL" id="CP001191">
    <property type="protein sequence ID" value="ACI57625.1"/>
    <property type="molecule type" value="Genomic_DNA"/>
</dbReference>
<dbReference type="RefSeq" id="WP_012559727.1">
    <property type="nucleotide sequence ID" value="NC_011369.1"/>
</dbReference>
<dbReference type="SMR" id="B5ZYK8"/>
<dbReference type="STRING" id="395492.Rleg2_4367"/>
<dbReference type="KEGG" id="rlt:Rleg2_4367"/>
<dbReference type="eggNOG" id="COG2226">
    <property type="taxonomic scope" value="Bacteria"/>
</dbReference>
<dbReference type="HOGENOM" id="CLU_037990_0_0_5"/>
<dbReference type="UniPathway" id="UPA00079">
    <property type="reaction ID" value="UER00169"/>
</dbReference>
<dbReference type="UniPathway" id="UPA00232"/>
<dbReference type="Proteomes" id="UP000008330">
    <property type="component" value="Chromosome"/>
</dbReference>
<dbReference type="GO" id="GO:0008425">
    <property type="term" value="F:2-methoxy-6-polyprenyl-1,4-benzoquinol methyltransferase activity"/>
    <property type="evidence" value="ECO:0007669"/>
    <property type="project" value="UniProtKB-UniRule"/>
</dbReference>
<dbReference type="GO" id="GO:0043770">
    <property type="term" value="F:demethylmenaquinone methyltransferase activity"/>
    <property type="evidence" value="ECO:0007669"/>
    <property type="project" value="UniProtKB-UniRule"/>
</dbReference>
<dbReference type="GO" id="GO:0009060">
    <property type="term" value="P:aerobic respiration"/>
    <property type="evidence" value="ECO:0007669"/>
    <property type="project" value="UniProtKB-UniRule"/>
</dbReference>
<dbReference type="GO" id="GO:0009234">
    <property type="term" value="P:menaquinone biosynthetic process"/>
    <property type="evidence" value="ECO:0007669"/>
    <property type="project" value="UniProtKB-UniRule"/>
</dbReference>
<dbReference type="GO" id="GO:0032259">
    <property type="term" value="P:methylation"/>
    <property type="evidence" value="ECO:0007669"/>
    <property type="project" value="UniProtKB-KW"/>
</dbReference>
<dbReference type="CDD" id="cd02440">
    <property type="entry name" value="AdoMet_MTases"/>
    <property type="match status" value="1"/>
</dbReference>
<dbReference type="FunFam" id="3.40.50.150:FF:000064">
    <property type="entry name" value="2-methoxy-6-polyprenyl-1,4-benzoquinol methylase, mitochondrial"/>
    <property type="match status" value="1"/>
</dbReference>
<dbReference type="Gene3D" id="3.40.50.150">
    <property type="entry name" value="Vaccinia Virus protein VP39"/>
    <property type="match status" value="1"/>
</dbReference>
<dbReference type="HAMAP" id="MF_01813">
    <property type="entry name" value="MenG_UbiE_methyltr"/>
    <property type="match status" value="1"/>
</dbReference>
<dbReference type="InterPro" id="IPR029063">
    <property type="entry name" value="SAM-dependent_MTases_sf"/>
</dbReference>
<dbReference type="InterPro" id="IPR004033">
    <property type="entry name" value="UbiE/COQ5_MeTrFase"/>
</dbReference>
<dbReference type="InterPro" id="IPR023576">
    <property type="entry name" value="UbiE/COQ5_MeTrFase_CS"/>
</dbReference>
<dbReference type="NCBIfam" id="TIGR01934">
    <property type="entry name" value="MenG_MenH_UbiE"/>
    <property type="match status" value="1"/>
</dbReference>
<dbReference type="NCBIfam" id="NF001242">
    <property type="entry name" value="PRK00216.1-3"/>
    <property type="match status" value="1"/>
</dbReference>
<dbReference type="NCBIfam" id="NF001244">
    <property type="entry name" value="PRK00216.1-5"/>
    <property type="match status" value="1"/>
</dbReference>
<dbReference type="PANTHER" id="PTHR43591:SF24">
    <property type="entry name" value="2-METHOXY-6-POLYPRENYL-1,4-BENZOQUINOL METHYLASE, MITOCHONDRIAL"/>
    <property type="match status" value="1"/>
</dbReference>
<dbReference type="PANTHER" id="PTHR43591">
    <property type="entry name" value="METHYLTRANSFERASE"/>
    <property type="match status" value="1"/>
</dbReference>
<dbReference type="Pfam" id="PF01209">
    <property type="entry name" value="Ubie_methyltran"/>
    <property type="match status" value="1"/>
</dbReference>
<dbReference type="SUPFAM" id="SSF53335">
    <property type="entry name" value="S-adenosyl-L-methionine-dependent methyltransferases"/>
    <property type="match status" value="1"/>
</dbReference>
<dbReference type="PROSITE" id="PS51608">
    <property type="entry name" value="SAM_MT_UBIE"/>
    <property type="match status" value="1"/>
</dbReference>
<dbReference type="PROSITE" id="PS01183">
    <property type="entry name" value="UBIE_1"/>
    <property type="match status" value="1"/>
</dbReference>
<dbReference type="PROSITE" id="PS01184">
    <property type="entry name" value="UBIE_2"/>
    <property type="match status" value="1"/>
</dbReference>
<comment type="function">
    <text evidence="1">Methyltransferase required for the conversion of demethylmenaquinol (DMKH2) to menaquinol (MKH2) and the conversion of 2-polyprenyl-6-methoxy-1,4-benzoquinol (DDMQH2) to 2-polyprenyl-3-methyl-6-methoxy-1,4-benzoquinol (DMQH2).</text>
</comment>
<comment type="catalytic activity">
    <reaction evidence="1">
        <text>a 2-demethylmenaquinol + S-adenosyl-L-methionine = a menaquinol + S-adenosyl-L-homocysteine + H(+)</text>
        <dbReference type="Rhea" id="RHEA:42640"/>
        <dbReference type="Rhea" id="RHEA-COMP:9539"/>
        <dbReference type="Rhea" id="RHEA-COMP:9563"/>
        <dbReference type="ChEBI" id="CHEBI:15378"/>
        <dbReference type="ChEBI" id="CHEBI:18151"/>
        <dbReference type="ChEBI" id="CHEBI:55437"/>
        <dbReference type="ChEBI" id="CHEBI:57856"/>
        <dbReference type="ChEBI" id="CHEBI:59789"/>
        <dbReference type="EC" id="2.1.1.163"/>
    </reaction>
</comment>
<comment type="catalytic activity">
    <reaction evidence="1">
        <text>a 2-methoxy-6-(all-trans-polyprenyl)benzene-1,4-diol + S-adenosyl-L-methionine = a 5-methoxy-2-methyl-3-(all-trans-polyprenyl)benzene-1,4-diol + S-adenosyl-L-homocysteine + H(+)</text>
        <dbReference type="Rhea" id="RHEA:28286"/>
        <dbReference type="Rhea" id="RHEA-COMP:10858"/>
        <dbReference type="Rhea" id="RHEA-COMP:10859"/>
        <dbReference type="ChEBI" id="CHEBI:15378"/>
        <dbReference type="ChEBI" id="CHEBI:57856"/>
        <dbReference type="ChEBI" id="CHEBI:59789"/>
        <dbReference type="ChEBI" id="CHEBI:84166"/>
        <dbReference type="ChEBI" id="CHEBI:84167"/>
        <dbReference type="EC" id="2.1.1.201"/>
    </reaction>
</comment>
<comment type="pathway">
    <text evidence="1">Quinol/quinone metabolism; menaquinone biosynthesis; menaquinol from 1,4-dihydroxy-2-naphthoate: step 2/2.</text>
</comment>
<comment type="pathway">
    <text evidence="1">Cofactor biosynthesis; ubiquinone biosynthesis.</text>
</comment>
<comment type="similarity">
    <text evidence="1">Belongs to the class I-like SAM-binding methyltransferase superfamily. MenG/UbiE family.</text>
</comment>
<gene>
    <name evidence="1" type="primary">ubiE</name>
    <name type="ordered locus">Rleg2_4367</name>
</gene>
<protein>
    <recommendedName>
        <fullName evidence="1">Ubiquinone/menaquinone biosynthesis C-methyltransferase UbiE</fullName>
        <ecNumber evidence="1">2.1.1.163</ecNumber>
        <ecNumber evidence="1">2.1.1.201</ecNumber>
    </recommendedName>
    <alternativeName>
        <fullName evidence="1">2-methoxy-6-polyprenyl-1,4-benzoquinol methylase</fullName>
    </alternativeName>
    <alternativeName>
        <fullName evidence="1">Demethylmenaquinone methyltransferase</fullName>
    </alternativeName>
</protein>
<proteinExistence type="inferred from homology"/>
<reference key="1">
    <citation type="journal article" date="2010" name="Stand. Genomic Sci.">
        <title>Complete genome sequence of Rhizobium leguminosarum bv trifolii strain WSM2304, an effective microsymbiont of the South American clover Trifolium polymorphum.</title>
        <authorList>
            <person name="Reeve W."/>
            <person name="O'Hara G."/>
            <person name="Chain P."/>
            <person name="Ardley J."/>
            <person name="Brau L."/>
            <person name="Nandesena K."/>
            <person name="Tiwari R."/>
            <person name="Malfatti S."/>
            <person name="Kiss H."/>
            <person name="Lapidus A."/>
            <person name="Copeland A."/>
            <person name="Nolan M."/>
            <person name="Land M."/>
            <person name="Ivanova N."/>
            <person name="Mavromatis K."/>
            <person name="Markowitz V."/>
            <person name="Kyrpides N."/>
            <person name="Melino V."/>
            <person name="Denton M."/>
            <person name="Yates R."/>
            <person name="Howieson J."/>
        </authorList>
    </citation>
    <scope>NUCLEOTIDE SEQUENCE [LARGE SCALE GENOMIC DNA]</scope>
    <source>
        <strain>WSM2304</strain>
    </source>
</reference>
<sequence>MPESRTSADGGMETSYGFREVPGGEKQDLVNQVFHKVAKRYDIMNDVMSMGMHRAWKDAMISALNPRKEPGYRVLDVAGGTGDIAFRIVEASGRQAHATVLDINGSMLGVGAERAEKKKLSGNLTFVEANAEELPFEPASFDAYTIAFGIRNVPRIDAALSEAYRVLKRGGRLLVLEFSEVDMPLLDRIYDAWSFNAIPQFGKAITGDAEPYQYLVESIRKFPNQENFAAMIRQAGFSRVTYTNYTGGIAALHSGWKL</sequence>
<organism>
    <name type="scientific">Rhizobium leguminosarum bv. trifolii (strain WSM2304)</name>
    <dbReference type="NCBI Taxonomy" id="395492"/>
    <lineage>
        <taxon>Bacteria</taxon>
        <taxon>Pseudomonadati</taxon>
        <taxon>Pseudomonadota</taxon>
        <taxon>Alphaproteobacteria</taxon>
        <taxon>Hyphomicrobiales</taxon>
        <taxon>Rhizobiaceae</taxon>
        <taxon>Rhizobium/Agrobacterium group</taxon>
        <taxon>Rhizobium</taxon>
    </lineage>
</organism>
<keyword id="KW-0474">Menaquinone biosynthesis</keyword>
<keyword id="KW-0489">Methyltransferase</keyword>
<keyword id="KW-1185">Reference proteome</keyword>
<keyword id="KW-0949">S-adenosyl-L-methionine</keyword>
<keyword id="KW-0808">Transferase</keyword>
<keyword id="KW-0831">Ubiquinone biosynthesis</keyword>
<feature type="chain" id="PRO_1000187792" description="Ubiquinone/menaquinone biosynthesis C-methyltransferase UbiE">
    <location>
        <begin position="1"/>
        <end position="258"/>
    </location>
</feature>
<feature type="region of interest" description="Disordered" evidence="2">
    <location>
        <begin position="1"/>
        <end position="21"/>
    </location>
</feature>
<feature type="binding site" evidence="1">
    <location>
        <position position="81"/>
    </location>
    <ligand>
        <name>S-adenosyl-L-methionine</name>
        <dbReference type="ChEBI" id="CHEBI:59789"/>
    </ligand>
</feature>
<feature type="binding site" evidence="1">
    <location>
        <position position="102"/>
    </location>
    <ligand>
        <name>S-adenosyl-L-methionine</name>
        <dbReference type="ChEBI" id="CHEBI:59789"/>
    </ligand>
</feature>
<feature type="binding site" evidence="1">
    <location>
        <begin position="130"/>
        <end position="131"/>
    </location>
    <ligand>
        <name>S-adenosyl-L-methionine</name>
        <dbReference type="ChEBI" id="CHEBI:59789"/>
    </ligand>
</feature>
<name>UBIE_RHILW</name>